<evidence type="ECO:0000255" key="1">
    <source>
        <dbReference type="HAMAP-Rule" id="MF_01080"/>
    </source>
</evidence>
<accession>A3PEI1</accession>
<keyword id="KW-0413">Isomerase</keyword>
<keyword id="KW-1185">Reference proteome</keyword>
<keyword id="KW-0819">tRNA processing</keyword>
<dbReference type="EC" id="5.4.99.25" evidence="1"/>
<dbReference type="EMBL" id="CP000576">
    <property type="protein sequence ID" value="ABO18156.1"/>
    <property type="molecule type" value="Genomic_DNA"/>
</dbReference>
<dbReference type="RefSeq" id="WP_011863460.1">
    <property type="nucleotide sequence ID" value="NC_009091.1"/>
</dbReference>
<dbReference type="SMR" id="A3PEI1"/>
<dbReference type="STRING" id="167546.P9301_15331"/>
<dbReference type="KEGG" id="pmg:P9301_15331"/>
<dbReference type="eggNOG" id="COG0130">
    <property type="taxonomic scope" value="Bacteria"/>
</dbReference>
<dbReference type="HOGENOM" id="CLU_032087_0_0_3"/>
<dbReference type="OrthoDB" id="9802309at2"/>
<dbReference type="Proteomes" id="UP000001430">
    <property type="component" value="Chromosome"/>
</dbReference>
<dbReference type="GO" id="GO:0003723">
    <property type="term" value="F:RNA binding"/>
    <property type="evidence" value="ECO:0007669"/>
    <property type="project" value="InterPro"/>
</dbReference>
<dbReference type="GO" id="GO:0160148">
    <property type="term" value="F:tRNA pseudouridine(55) synthase activity"/>
    <property type="evidence" value="ECO:0007669"/>
    <property type="project" value="UniProtKB-EC"/>
</dbReference>
<dbReference type="GO" id="GO:1990481">
    <property type="term" value="P:mRNA pseudouridine synthesis"/>
    <property type="evidence" value="ECO:0007669"/>
    <property type="project" value="TreeGrafter"/>
</dbReference>
<dbReference type="GO" id="GO:0031119">
    <property type="term" value="P:tRNA pseudouridine synthesis"/>
    <property type="evidence" value="ECO:0007669"/>
    <property type="project" value="UniProtKB-UniRule"/>
</dbReference>
<dbReference type="CDD" id="cd02573">
    <property type="entry name" value="PseudoU_synth_EcTruB"/>
    <property type="match status" value="1"/>
</dbReference>
<dbReference type="Gene3D" id="3.30.2350.10">
    <property type="entry name" value="Pseudouridine synthase"/>
    <property type="match status" value="1"/>
</dbReference>
<dbReference type="HAMAP" id="MF_01080">
    <property type="entry name" value="TruB_bact"/>
    <property type="match status" value="1"/>
</dbReference>
<dbReference type="InterPro" id="IPR020103">
    <property type="entry name" value="PsdUridine_synth_cat_dom_sf"/>
</dbReference>
<dbReference type="InterPro" id="IPR002501">
    <property type="entry name" value="PsdUridine_synth_N"/>
</dbReference>
<dbReference type="InterPro" id="IPR014780">
    <property type="entry name" value="tRNA_psdUridine_synth_TruB"/>
</dbReference>
<dbReference type="NCBIfam" id="TIGR00431">
    <property type="entry name" value="TruB"/>
    <property type="match status" value="1"/>
</dbReference>
<dbReference type="PANTHER" id="PTHR13767:SF2">
    <property type="entry name" value="PSEUDOURIDYLATE SYNTHASE TRUB1"/>
    <property type="match status" value="1"/>
</dbReference>
<dbReference type="PANTHER" id="PTHR13767">
    <property type="entry name" value="TRNA-PSEUDOURIDINE SYNTHASE"/>
    <property type="match status" value="1"/>
</dbReference>
<dbReference type="Pfam" id="PF01509">
    <property type="entry name" value="TruB_N"/>
    <property type="match status" value="1"/>
</dbReference>
<dbReference type="SUPFAM" id="SSF55120">
    <property type="entry name" value="Pseudouridine synthase"/>
    <property type="match status" value="1"/>
</dbReference>
<proteinExistence type="inferred from homology"/>
<sequence>METKDGFLVINKDKGCTSHDCVKQIRKLLNTKKVGHTGTLDPEVIGILPIAIGSATRFIQYLPQGKTYIGQIKLGIRTNTDDIHGEIINQKSWPKISDEKLDQYLNRFRGIIKQIPPKVSSVHINGERAYKKSFRNEVFELAPREVKIDELTLMKWDQINGILEIKVKCSAGTYIRAIARDLGEILNSEGCLLQLKRISACGFDEQNSIKISDIEKDKKNSKNFIIPTISALNHISSFVLSTEEQINFWQTGRAIRVDINYFQENKSFDYKKPIKVIDKKQILLGIGFLNEEQSNINPKLVLNAK</sequence>
<organism>
    <name type="scientific">Prochlorococcus marinus (strain MIT 9301)</name>
    <dbReference type="NCBI Taxonomy" id="167546"/>
    <lineage>
        <taxon>Bacteria</taxon>
        <taxon>Bacillati</taxon>
        <taxon>Cyanobacteriota</taxon>
        <taxon>Cyanophyceae</taxon>
        <taxon>Synechococcales</taxon>
        <taxon>Prochlorococcaceae</taxon>
        <taxon>Prochlorococcus</taxon>
    </lineage>
</organism>
<protein>
    <recommendedName>
        <fullName evidence="1">tRNA pseudouridine synthase B</fullName>
        <ecNumber evidence="1">5.4.99.25</ecNumber>
    </recommendedName>
    <alternativeName>
        <fullName evidence="1">tRNA pseudouridine(55) synthase</fullName>
        <shortName evidence="1">Psi55 synthase</shortName>
    </alternativeName>
    <alternativeName>
        <fullName evidence="1">tRNA pseudouridylate synthase</fullName>
    </alternativeName>
    <alternativeName>
        <fullName evidence="1">tRNA-uridine isomerase</fullName>
    </alternativeName>
</protein>
<gene>
    <name evidence="1" type="primary">truB</name>
    <name type="ordered locus">P9301_15331</name>
</gene>
<name>TRUB_PROM0</name>
<comment type="function">
    <text evidence="1">Responsible for synthesis of pseudouridine from uracil-55 in the psi GC loop of transfer RNAs.</text>
</comment>
<comment type="catalytic activity">
    <reaction evidence="1">
        <text>uridine(55) in tRNA = pseudouridine(55) in tRNA</text>
        <dbReference type="Rhea" id="RHEA:42532"/>
        <dbReference type="Rhea" id="RHEA-COMP:10101"/>
        <dbReference type="Rhea" id="RHEA-COMP:10102"/>
        <dbReference type="ChEBI" id="CHEBI:65314"/>
        <dbReference type="ChEBI" id="CHEBI:65315"/>
        <dbReference type="EC" id="5.4.99.25"/>
    </reaction>
</comment>
<comment type="similarity">
    <text evidence="1">Belongs to the pseudouridine synthase TruB family. Type 1 subfamily.</text>
</comment>
<feature type="chain" id="PRO_1000084637" description="tRNA pseudouridine synthase B">
    <location>
        <begin position="1"/>
        <end position="305"/>
    </location>
</feature>
<feature type="active site" description="Nucleophile" evidence="1">
    <location>
        <position position="41"/>
    </location>
</feature>
<reference key="1">
    <citation type="journal article" date="2007" name="PLoS Genet.">
        <title>Patterns and implications of gene gain and loss in the evolution of Prochlorococcus.</title>
        <authorList>
            <person name="Kettler G.C."/>
            <person name="Martiny A.C."/>
            <person name="Huang K."/>
            <person name="Zucker J."/>
            <person name="Coleman M.L."/>
            <person name="Rodrigue S."/>
            <person name="Chen F."/>
            <person name="Lapidus A."/>
            <person name="Ferriera S."/>
            <person name="Johnson J."/>
            <person name="Steglich C."/>
            <person name="Church G.M."/>
            <person name="Richardson P."/>
            <person name="Chisholm S.W."/>
        </authorList>
    </citation>
    <scope>NUCLEOTIDE SEQUENCE [LARGE SCALE GENOMIC DNA]</scope>
    <source>
        <strain>MIT 9301</strain>
    </source>
</reference>